<reference key="1">
    <citation type="journal article" date="2009" name="Genome Biol.">
        <title>A whole-genome assembly of the domestic cow, Bos taurus.</title>
        <authorList>
            <person name="Zimin A.V."/>
            <person name="Delcher A.L."/>
            <person name="Florea L."/>
            <person name="Kelley D.R."/>
            <person name="Schatz M.C."/>
            <person name="Puiu D."/>
            <person name="Hanrahan F."/>
            <person name="Pertea G."/>
            <person name="Van Tassell C.P."/>
            <person name="Sonstegard T.S."/>
            <person name="Marcais G."/>
            <person name="Roberts M."/>
            <person name="Subramanian P."/>
            <person name="Yorke J.A."/>
            <person name="Salzberg S.L."/>
        </authorList>
    </citation>
    <scope>NUCLEOTIDE SEQUENCE [LARGE SCALE GENOMIC DNA]</scope>
    <source>
        <strain>Hereford</strain>
    </source>
</reference>
<evidence type="ECO:0000250" key="1"/>
<evidence type="ECO:0000250" key="2">
    <source>
        <dbReference type="UniProtKB" id="D3ZY60"/>
    </source>
</evidence>
<evidence type="ECO:0000255" key="3">
    <source>
        <dbReference type="PROSITE-ProRule" id="PRU00145"/>
    </source>
</evidence>
<evidence type="ECO:0000256" key="4">
    <source>
        <dbReference type="SAM" id="MobiDB-lite"/>
    </source>
</evidence>
<sequence>MEGVLYKWTNYLSGWQPRWFLLCGGILSYYDSPEDAWKGCKGSIQMAVCEIQVHSVDNTRMDLIIPGEQYFYLKARSVAERQRWLVALGSAKACLTDSRTQKEKEFAENTENLKTKMSELRLYCDLLVQQVDKTKEVTTTGVSSSEEGIDVGTLLKSTCNTFLKTLEECMQIANAAFTSELLYRTPPGSPQLAMLKSNKMKHPIVPIHNSLERQMELNSCENGSLNMEINDDEEILVRNKSSLCLKPAETDCSISSEENTDDNITVQGEMMKENGEESLGNHDSDLAQPELHSTSSSPESHWEEDQEVIPTFFSTMNTSFSDIELLEDSGIPTEAFLASCYAVVPVLDKLGPTVFAPVKMDLVGNIKKVNQKYITNKEEFTTLQKIVLHEVEADVAQVRNSATEALLWLKRGLKFLKGFLTEVKNGEKDIQTALNNAYGKTLRQHHGWVVRGVFALALRAAPSYEDFVAALTIKEGDHQKAAFSVGMQRDLSLYLPAMEKQLAILDTLYEVHGLESDEVV</sequence>
<dbReference type="EMBL" id="DAAA02010917">
    <property type="status" value="NOT_ANNOTATED_CDS"/>
    <property type="molecule type" value="Genomic_DNA"/>
</dbReference>
<dbReference type="RefSeq" id="NP_001183961.1">
    <property type="nucleotide sequence ID" value="NM_001197032.1"/>
</dbReference>
<dbReference type="SMR" id="F1MS15"/>
<dbReference type="FunCoup" id="F1MS15">
    <property type="interactions" value="2507"/>
</dbReference>
<dbReference type="STRING" id="9913.ENSBTAP00000071141"/>
<dbReference type="PaxDb" id="9913-ENSBTAP00000000679"/>
<dbReference type="Ensembl" id="ENSBTAT00000000679.7">
    <property type="protein sequence ID" value="ENSBTAP00000000679.7"/>
    <property type="gene ID" value="ENSBTAG00000000521.7"/>
</dbReference>
<dbReference type="GeneID" id="538919"/>
<dbReference type="KEGG" id="bta:538919"/>
<dbReference type="CTD" id="84725"/>
<dbReference type="VEuPathDB" id="HostDB:ENSBTAG00000000521"/>
<dbReference type="VGNC" id="VGNC:53664">
    <property type="gene designation" value="PLEKHA8"/>
</dbReference>
<dbReference type="eggNOG" id="KOG3221">
    <property type="taxonomic scope" value="Eukaryota"/>
</dbReference>
<dbReference type="GeneTree" id="ENSGT00940000157288"/>
<dbReference type="HOGENOM" id="CLU_039839_0_0_1"/>
<dbReference type="InParanoid" id="F1MS15"/>
<dbReference type="OMA" id="ERQMEMN"/>
<dbReference type="OrthoDB" id="1854502at2759"/>
<dbReference type="TreeFam" id="TF317467"/>
<dbReference type="Reactome" id="R-BTA-1660499">
    <property type="pathway name" value="Synthesis of PIPs at the plasma membrane"/>
</dbReference>
<dbReference type="Reactome" id="R-BTA-9845576">
    <property type="pathway name" value="Glycosphingolipid transport"/>
</dbReference>
<dbReference type="Proteomes" id="UP000009136">
    <property type="component" value="Chromosome 4"/>
</dbReference>
<dbReference type="Bgee" id="ENSBTAG00000000521">
    <property type="expression patterns" value="Expressed in oocyte and 107 other cell types or tissues"/>
</dbReference>
<dbReference type="GO" id="GO:0005829">
    <property type="term" value="C:cytosol"/>
    <property type="evidence" value="ECO:0000318"/>
    <property type="project" value="GO_Central"/>
</dbReference>
<dbReference type="GO" id="GO:0016020">
    <property type="term" value="C:membrane"/>
    <property type="evidence" value="ECO:0007669"/>
    <property type="project" value="UniProtKB-SubCell"/>
</dbReference>
<dbReference type="GO" id="GO:0005654">
    <property type="term" value="C:nucleoplasm"/>
    <property type="evidence" value="ECO:0007669"/>
    <property type="project" value="Ensembl"/>
</dbReference>
<dbReference type="GO" id="GO:0005802">
    <property type="term" value="C:trans-Golgi network"/>
    <property type="evidence" value="ECO:0000250"/>
    <property type="project" value="UniProtKB"/>
</dbReference>
<dbReference type="GO" id="GO:1902387">
    <property type="term" value="F:ceramide 1-phosphate binding"/>
    <property type="evidence" value="ECO:0000318"/>
    <property type="project" value="GO_Central"/>
</dbReference>
<dbReference type="GO" id="GO:1902388">
    <property type="term" value="F:ceramide 1-phosphate transfer activity"/>
    <property type="evidence" value="ECO:0000318"/>
    <property type="project" value="GO_Central"/>
</dbReference>
<dbReference type="GO" id="GO:0097001">
    <property type="term" value="F:ceramide binding"/>
    <property type="evidence" value="ECO:0000250"/>
    <property type="project" value="UniProtKB"/>
</dbReference>
<dbReference type="GO" id="GO:0051861">
    <property type="term" value="F:glycolipid binding"/>
    <property type="evidence" value="ECO:0000250"/>
    <property type="project" value="UniProtKB"/>
</dbReference>
<dbReference type="GO" id="GO:0017089">
    <property type="term" value="F:glycolipid transfer activity"/>
    <property type="evidence" value="ECO:0000250"/>
    <property type="project" value="UniProtKB"/>
</dbReference>
<dbReference type="GO" id="GO:0070273">
    <property type="term" value="F:phosphatidylinositol-4-phosphate binding"/>
    <property type="evidence" value="ECO:0000250"/>
    <property type="project" value="UniProtKB"/>
</dbReference>
<dbReference type="GO" id="GO:0035627">
    <property type="term" value="P:ceramide transport"/>
    <property type="evidence" value="ECO:0000318"/>
    <property type="project" value="GO_Central"/>
</dbReference>
<dbReference type="GO" id="GO:0035621">
    <property type="term" value="P:ER to Golgi ceramide transport"/>
    <property type="evidence" value="ECO:0000250"/>
    <property type="project" value="UniProtKB"/>
</dbReference>
<dbReference type="GO" id="GO:0120009">
    <property type="term" value="P:intermembrane lipid transfer"/>
    <property type="evidence" value="ECO:0000318"/>
    <property type="project" value="GO_Central"/>
</dbReference>
<dbReference type="GO" id="GO:0006869">
    <property type="term" value="P:lipid transport"/>
    <property type="evidence" value="ECO:0000250"/>
    <property type="project" value="UniProtKB"/>
</dbReference>
<dbReference type="GO" id="GO:0015031">
    <property type="term" value="P:protein transport"/>
    <property type="evidence" value="ECO:0007669"/>
    <property type="project" value="UniProtKB-KW"/>
</dbReference>
<dbReference type="CDD" id="cd01247">
    <property type="entry name" value="PH_FAPP1_FAPP2"/>
    <property type="match status" value="1"/>
</dbReference>
<dbReference type="FunFam" id="1.10.3520.10:FF:000001">
    <property type="entry name" value="Pleckstrin domain-containing family A member 8"/>
    <property type="match status" value="1"/>
</dbReference>
<dbReference type="FunFam" id="2.30.29.30:FF:000085">
    <property type="entry name" value="Pleckstrin homology domain-containing family A member 8"/>
    <property type="match status" value="1"/>
</dbReference>
<dbReference type="Gene3D" id="1.10.3520.10">
    <property type="entry name" value="Glycolipid transfer protein"/>
    <property type="match status" value="1"/>
</dbReference>
<dbReference type="Gene3D" id="2.30.29.30">
    <property type="entry name" value="Pleckstrin-homology domain (PH domain)/Phosphotyrosine-binding domain (PTB)"/>
    <property type="match status" value="1"/>
</dbReference>
<dbReference type="InterPro" id="IPR036497">
    <property type="entry name" value="GLTP_sf"/>
</dbReference>
<dbReference type="InterPro" id="IPR014830">
    <property type="entry name" value="Glycolipid_transfer_prot_dom"/>
</dbReference>
<dbReference type="InterPro" id="IPR011993">
    <property type="entry name" value="PH-like_dom_sf"/>
</dbReference>
<dbReference type="InterPro" id="IPR001849">
    <property type="entry name" value="PH_domain"/>
</dbReference>
<dbReference type="PANTHER" id="PTHR10219">
    <property type="entry name" value="GLYCOLIPID TRANSFER PROTEIN-RELATED"/>
    <property type="match status" value="1"/>
</dbReference>
<dbReference type="PANTHER" id="PTHR10219:SF25">
    <property type="entry name" value="PLECKSTRIN HOMOLOGY DOMAIN-CONTAINING FAMILY A MEMBER 8"/>
    <property type="match status" value="1"/>
</dbReference>
<dbReference type="Pfam" id="PF08718">
    <property type="entry name" value="GLTP"/>
    <property type="match status" value="1"/>
</dbReference>
<dbReference type="Pfam" id="PF00169">
    <property type="entry name" value="PH"/>
    <property type="match status" value="1"/>
</dbReference>
<dbReference type="SMART" id="SM00233">
    <property type="entry name" value="PH"/>
    <property type="match status" value="1"/>
</dbReference>
<dbReference type="SUPFAM" id="SSF110004">
    <property type="entry name" value="Glycolipid transfer protein, GLTP"/>
    <property type="match status" value="1"/>
</dbReference>
<dbReference type="SUPFAM" id="SSF50729">
    <property type="entry name" value="PH domain-like"/>
    <property type="match status" value="1"/>
</dbReference>
<dbReference type="PROSITE" id="PS50003">
    <property type="entry name" value="PH_DOMAIN"/>
    <property type="match status" value="1"/>
</dbReference>
<gene>
    <name type="primary">PLEKHA8</name>
    <name type="synonym">FAPP2</name>
</gene>
<keyword id="KW-0963">Cytoplasm</keyword>
<keyword id="KW-0333">Golgi apparatus</keyword>
<keyword id="KW-0445">Lipid transport</keyword>
<keyword id="KW-0446">Lipid-binding</keyword>
<keyword id="KW-0472">Membrane</keyword>
<keyword id="KW-0597">Phosphoprotein</keyword>
<keyword id="KW-0653">Protein transport</keyword>
<keyword id="KW-1185">Reference proteome</keyword>
<keyword id="KW-0813">Transport</keyword>
<name>PKHA8_BOVIN</name>
<protein>
    <recommendedName>
        <fullName>Pleckstrin homology domain-containing family A member 8</fullName>
        <shortName>PH domain-containing family A member 8</shortName>
    </recommendedName>
    <alternativeName>
        <fullName>Phosphatidylinositol-four-phosphate adapter protein 2</fullName>
        <shortName>FAPP-2</shortName>
        <shortName>Phosphoinositol 4-phosphate adapter protein 2</shortName>
    </alternativeName>
</protein>
<comment type="function">
    <text evidence="1">Cargo transport protein that is required for apical transport from the trans-Golgi network (TGN). Transports AQP2 from the trans-Golgi network (TGN) to sites of AQP2 phosphorylation. Mediates the non-vesicular transport of glucosylceramide (GlcCer) from the trans-Golgi network (TGN) to the plasma membrane and plays a pivotal role in the synthesis of complex glycosphingolipids. Binding of both phosphatidylinositol 4-phosphate (PIP) and ARF1 are essential for the GlcCer transfer ability. Also required for primary cilium formation, possibly by being involved in the transport of raft lipids to the apical membrane, and for membrane tubulation (By similarity).</text>
</comment>
<comment type="subunit">
    <text evidence="1">Homodimer. Interacts with ARF1; the interaction together with phosphatidylinositol 4-phosphate binding is required for FAPP2 GlcCer transfer ability.</text>
</comment>
<comment type="subcellular location">
    <subcellularLocation>
        <location evidence="1">Cytoplasm</location>
    </subcellularLocation>
    <subcellularLocation>
        <location evidence="1">Golgi apparatus</location>
        <location evidence="1">trans-Golgi network membrane</location>
    </subcellularLocation>
    <subcellularLocation>
        <location evidence="1">Membrane</location>
        <topology evidence="1">Peripheral membrane protein</topology>
    </subcellularLocation>
    <text evidence="1">Mainly localized to the trans-Golgi network (TGN) but also found at the rims of Golgi cisternae. Associates with ARF1 at Golgi apparatus membranes (By similarity).</text>
</comment>
<comment type="domain">
    <text evidence="1">The PH domain of FAPPS binds the small GTPase ARF1 and phosphatidylinositol-4-phosphate (PtdIns4P) with high selectivity, and is required for recruitment of FAPPs to the trans-Golgi network (TGN).</text>
</comment>
<feature type="chain" id="PRO_0000419606" description="Pleckstrin homology domain-containing family A member 8">
    <location>
        <begin position="1"/>
        <end position="520"/>
    </location>
</feature>
<feature type="domain" description="PH" evidence="3">
    <location>
        <begin position="1"/>
        <end position="93"/>
    </location>
</feature>
<feature type="region of interest" description="Disordered" evidence="4">
    <location>
        <begin position="275"/>
        <end position="305"/>
    </location>
</feature>
<feature type="region of interest" description="Glycolipid transfer protein homology domain" evidence="1">
    <location>
        <begin position="311"/>
        <end position="520"/>
    </location>
</feature>
<feature type="compositionally biased region" description="Basic and acidic residues" evidence="4">
    <location>
        <begin position="275"/>
        <end position="285"/>
    </location>
</feature>
<feature type="modified residue" description="Phosphothreonine" evidence="2">
    <location>
        <position position="139"/>
    </location>
</feature>
<feature type="modified residue" description="Phosphoserine" evidence="2">
    <location>
        <position position="145"/>
    </location>
</feature>
<feature type="modified residue" description="Phosphothreonine" evidence="2">
    <location>
        <position position="153"/>
    </location>
</feature>
<organism>
    <name type="scientific">Bos taurus</name>
    <name type="common">Bovine</name>
    <dbReference type="NCBI Taxonomy" id="9913"/>
    <lineage>
        <taxon>Eukaryota</taxon>
        <taxon>Metazoa</taxon>
        <taxon>Chordata</taxon>
        <taxon>Craniata</taxon>
        <taxon>Vertebrata</taxon>
        <taxon>Euteleostomi</taxon>
        <taxon>Mammalia</taxon>
        <taxon>Eutheria</taxon>
        <taxon>Laurasiatheria</taxon>
        <taxon>Artiodactyla</taxon>
        <taxon>Ruminantia</taxon>
        <taxon>Pecora</taxon>
        <taxon>Bovidae</taxon>
        <taxon>Bovinae</taxon>
        <taxon>Bos</taxon>
    </lineage>
</organism>
<accession>F1MS15</accession>
<proteinExistence type="inferred from homology"/>